<organism>
    <name type="scientific">Escherichia coli O7:K1 (strain IAI39 / ExPEC)</name>
    <dbReference type="NCBI Taxonomy" id="585057"/>
    <lineage>
        <taxon>Bacteria</taxon>
        <taxon>Pseudomonadati</taxon>
        <taxon>Pseudomonadota</taxon>
        <taxon>Gammaproteobacteria</taxon>
        <taxon>Enterobacterales</taxon>
        <taxon>Enterobacteriaceae</taxon>
        <taxon>Escherichia</taxon>
    </lineage>
</organism>
<sequence length="266" mass="29992">MRKNTYAMRYVAGQPAERILPPGSFASIGQALPPGEPLSTEERIRILVWNIYKQQRAEWLSVLKNYGKDAHLVLLQEAQTTPELVQFATANYLAADQVPAFVLPQHPSGVMTLSAAHPVYCCPLREREPILRLAKSALVTVYPLPDTRLLMVVNIHAVNFSLGVDVYSKQLLPIGDQIAHHSGPVIMAGDFNAWSRRRMNALYRFAREMSLRQVRFTDDQRRRAFGRPLDFVFYRGLNVSEASVLVTRASDHNPLLVEFSPGKPDK</sequence>
<comment type="subcellular location">
    <subcellularLocation>
        <location evidence="1">Cytoplasm</location>
    </subcellularLocation>
</comment>
<comment type="similarity">
    <text evidence="1">Belongs to the UPF0294 family.</text>
</comment>
<reference key="1">
    <citation type="journal article" date="2009" name="PLoS Genet.">
        <title>Organised genome dynamics in the Escherichia coli species results in highly diverse adaptive paths.</title>
        <authorList>
            <person name="Touchon M."/>
            <person name="Hoede C."/>
            <person name="Tenaillon O."/>
            <person name="Barbe V."/>
            <person name="Baeriswyl S."/>
            <person name="Bidet P."/>
            <person name="Bingen E."/>
            <person name="Bonacorsi S."/>
            <person name="Bouchier C."/>
            <person name="Bouvet O."/>
            <person name="Calteau A."/>
            <person name="Chiapello H."/>
            <person name="Clermont O."/>
            <person name="Cruveiller S."/>
            <person name="Danchin A."/>
            <person name="Diard M."/>
            <person name="Dossat C."/>
            <person name="Karoui M.E."/>
            <person name="Frapy E."/>
            <person name="Garry L."/>
            <person name="Ghigo J.M."/>
            <person name="Gilles A.M."/>
            <person name="Johnson J."/>
            <person name="Le Bouguenec C."/>
            <person name="Lescat M."/>
            <person name="Mangenot S."/>
            <person name="Martinez-Jehanne V."/>
            <person name="Matic I."/>
            <person name="Nassif X."/>
            <person name="Oztas S."/>
            <person name="Petit M.A."/>
            <person name="Pichon C."/>
            <person name="Rouy Z."/>
            <person name="Ruf C.S."/>
            <person name="Schneider D."/>
            <person name="Tourret J."/>
            <person name="Vacherie B."/>
            <person name="Vallenet D."/>
            <person name="Medigue C."/>
            <person name="Rocha E.P.C."/>
            <person name="Denamur E."/>
        </authorList>
    </citation>
    <scope>NUCLEOTIDE SEQUENCE [LARGE SCALE GENOMIC DNA]</scope>
    <source>
        <strain>IAI39 / ExPEC</strain>
    </source>
</reference>
<name>YAFD_ECO7I</name>
<gene>
    <name evidence="1" type="primary">yafD</name>
    <name type="ordered locus">ECIAI39_0440</name>
</gene>
<proteinExistence type="inferred from homology"/>
<feature type="chain" id="PRO_1000137239" description="UPF0294 protein YafD">
    <location>
        <begin position="1"/>
        <end position="266"/>
    </location>
</feature>
<protein>
    <recommendedName>
        <fullName evidence="1">UPF0294 protein YafD</fullName>
    </recommendedName>
</protein>
<dbReference type="EMBL" id="CU928164">
    <property type="protein sequence ID" value="CAR16578.1"/>
    <property type="molecule type" value="Genomic_DNA"/>
</dbReference>
<dbReference type="RefSeq" id="WP_001230983.1">
    <property type="nucleotide sequence ID" value="NC_011750.1"/>
</dbReference>
<dbReference type="RefSeq" id="YP_002406473.1">
    <property type="nucleotide sequence ID" value="NC_011750.1"/>
</dbReference>
<dbReference type="SMR" id="B7NKW9"/>
<dbReference type="STRING" id="585057.ECIAI39_0440"/>
<dbReference type="KEGG" id="ect:ECIAI39_0440"/>
<dbReference type="PATRIC" id="fig|585057.6.peg.469"/>
<dbReference type="HOGENOM" id="CLU_083563_0_0_6"/>
<dbReference type="Proteomes" id="UP000000749">
    <property type="component" value="Chromosome"/>
</dbReference>
<dbReference type="GO" id="GO:0005737">
    <property type="term" value="C:cytoplasm"/>
    <property type="evidence" value="ECO:0007669"/>
    <property type="project" value="UniProtKB-SubCell"/>
</dbReference>
<dbReference type="GO" id="GO:0003824">
    <property type="term" value="F:catalytic activity"/>
    <property type="evidence" value="ECO:0007669"/>
    <property type="project" value="InterPro"/>
</dbReference>
<dbReference type="Gene3D" id="3.60.10.10">
    <property type="entry name" value="Endonuclease/exonuclease/phosphatase"/>
    <property type="match status" value="1"/>
</dbReference>
<dbReference type="HAMAP" id="MF_01119">
    <property type="entry name" value="UPF0294"/>
    <property type="match status" value="1"/>
</dbReference>
<dbReference type="InterPro" id="IPR036691">
    <property type="entry name" value="Endo/exonu/phosph_ase_sf"/>
</dbReference>
<dbReference type="InterPro" id="IPR005135">
    <property type="entry name" value="Endo/exonuclease/phosphatase"/>
</dbReference>
<dbReference type="InterPro" id="IPR022958">
    <property type="entry name" value="UPF0294"/>
</dbReference>
<dbReference type="NCBIfam" id="NF003839">
    <property type="entry name" value="PRK05421.1-1"/>
    <property type="match status" value="1"/>
</dbReference>
<dbReference type="NCBIfam" id="NF003840">
    <property type="entry name" value="PRK05421.1-2"/>
    <property type="match status" value="1"/>
</dbReference>
<dbReference type="NCBIfam" id="NF003841">
    <property type="entry name" value="PRK05421.1-3"/>
    <property type="match status" value="1"/>
</dbReference>
<dbReference type="NCBIfam" id="NF003842">
    <property type="entry name" value="PRK05421.1-4"/>
    <property type="match status" value="1"/>
</dbReference>
<dbReference type="Pfam" id="PF03372">
    <property type="entry name" value="Exo_endo_phos"/>
    <property type="match status" value="1"/>
</dbReference>
<dbReference type="SUPFAM" id="SSF56219">
    <property type="entry name" value="DNase I-like"/>
    <property type="match status" value="1"/>
</dbReference>
<evidence type="ECO:0000255" key="1">
    <source>
        <dbReference type="HAMAP-Rule" id="MF_01119"/>
    </source>
</evidence>
<accession>B7NKW9</accession>
<keyword id="KW-0963">Cytoplasm</keyword>